<dbReference type="EC" id="1.3.5.2" evidence="1"/>
<dbReference type="EMBL" id="CP001217">
    <property type="protein sequence ID" value="ACJ07589.1"/>
    <property type="molecule type" value="Genomic_DNA"/>
</dbReference>
<dbReference type="SMR" id="B6JL11"/>
<dbReference type="KEGG" id="hpp:HPP12_0432"/>
<dbReference type="HOGENOM" id="CLU_013640_2_0_7"/>
<dbReference type="UniPathway" id="UPA00070">
    <property type="reaction ID" value="UER00946"/>
</dbReference>
<dbReference type="Proteomes" id="UP000008198">
    <property type="component" value="Chromosome"/>
</dbReference>
<dbReference type="GO" id="GO:0005737">
    <property type="term" value="C:cytoplasm"/>
    <property type="evidence" value="ECO:0007669"/>
    <property type="project" value="InterPro"/>
</dbReference>
<dbReference type="GO" id="GO:0005886">
    <property type="term" value="C:plasma membrane"/>
    <property type="evidence" value="ECO:0007669"/>
    <property type="project" value="UniProtKB-SubCell"/>
</dbReference>
<dbReference type="GO" id="GO:0106430">
    <property type="term" value="F:dihydroorotate dehydrogenase (quinone) activity"/>
    <property type="evidence" value="ECO:0007669"/>
    <property type="project" value="UniProtKB-EC"/>
</dbReference>
<dbReference type="GO" id="GO:0006207">
    <property type="term" value="P:'de novo' pyrimidine nucleobase biosynthetic process"/>
    <property type="evidence" value="ECO:0007669"/>
    <property type="project" value="InterPro"/>
</dbReference>
<dbReference type="GO" id="GO:0044205">
    <property type="term" value="P:'de novo' UMP biosynthetic process"/>
    <property type="evidence" value="ECO:0007669"/>
    <property type="project" value="UniProtKB-UniRule"/>
</dbReference>
<dbReference type="CDD" id="cd04738">
    <property type="entry name" value="DHOD_2_like"/>
    <property type="match status" value="1"/>
</dbReference>
<dbReference type="FunFam" id="3.20.20.70:FF:000319">
    <property type="entry name" value="Dihydroorotate dehydrogenase (quinone)"/>
    <property type="match status" value="1"/>
</dbReference>
<dbReference type="Gene3D" id="3.20.20.70">
    <property type="entry name" value="Aldolase class I"/>
    <property type="match status" value="1"/>
</dbReference>
<dbReference type="HAMAP" id="MF_00225">
    <property type="entry name" value="DHO_dh_type2"/>
    <property type="match status" value="1"/>
</dbReference>
<dbReference type="InterPro" id="IPR013785">
    <property type="entry name" value="Aldolase_TIM"/>
</dbReference>
<dbReference type="InterPro" id="IPR050074">
    <property type="entry name" value="DHO_dehydrogenase"/>
</dbReference>
<dbReference type="InterPro" id="IPR012135">
    <property type="entry name" value="Dihydroorotate_DH_1_2"/>
</dbReference>
<dbReference type="InterPro" id="IPR005719">
    <property type="entry name" value="Dihydroorotate_DH_2"/>
</dbReference>
<dbReference type="InterPro" id="IPR005720">
    <property type="entry name" value="Dihydroorotate_DH_cat"/>
</dbReference>
<dbReference type="InterPro" id="IPR001295">
    <property type="entry name" value="Dihydroorotate_DH_CS"/>
</dbReference>
<dbReference type="NCBIfam" id="NF003649">
    <property type="entry name" value="PRK05286.2-2"/>
    <property type="match status" value="1"/>
</dbReference>
<dbReference type="NCBIfam" id="NF003652">
    <property type="entry name" value="PRK05286.2-5"/>
    <property type="match status" value="1"/>
</dbReference>
<dbReference type="NCBIfam" id="TIGR01036">
    <property type="entry name" value="pyrD_sub2"/>
    <property type="match status" value="1"/>
</dbReference>
<dbReference type="PANTHER" id="PTHR48109:SF4">
    <property type="entry name" value="DIHYDROOROTATE DEHYDROGENASE (QUINONE), MITOCHONDRIAL"/>
    <property type="match status" value="1"/>
</dbReference>
<dbReference type="PANTHER" id="PTHR48109">
    <property type="entry name" value="DIHYDROOROTATE DEHYDROGENASE (QUINONE), MITOCHONDRIAL-RELATED"/>
    <property type="match status" value="1"/>
</dbReference>
<dbReference type="Pfam" id="PF01180">
    <property type="entry name" value="DHO_dh"/>
    <property type="match status" value="1"/>
</dbReference>
<dbReference type="PIRSF" id="PIRSF000164">
    <property type="entry name" value="DHO_oxidase"/>
    <property type="match status" value="1"/>
</dbReference>
<dbReference type="SUPFAM" id="SSF51395">
    <property type="entry name" value="FMN-linked oxidoreductases"/>
    <property type="match status" value="1"/>
</dbReference>
<dbReference type="PROSITE" id="PS00911">
    <property type="entry name" value="DHODEHASE_1"/>
    <property type="match status" value="1"/>
</dbReference>
<dbReference type="PROSITE" id="PS00912">
    <property type="entry name" value="DHODEHASE_2"/>
    <property type="match status" value="1"/>
</dbReference>
<feature type="chain" id="PRO_1000100266" description="Dihydroorotate dehydrogenase (quinone)">
    <location>
        <begin position="1"/>
        <end position="351"/>
    </location>
</feature>
<feature type="active site" description="Nucleophile" evidence="1">
    <location>
        <position position="181"/>
    </location>
</feature>
<feature type="binding site" evidence="1">
    <location>
        <begin position="67"/>
        <end position="71"/>
    </location>
    <ligand>
        <name>FMN</name>
        <dbReference type="ChEBI" id="CHEBI:58210"/>
    </ligand>
</feature>
<feature type="binding site" evidence="1">
    <location>
        <position position="71"/>
    </location>
    <ligand>
        <name>substrate</name>
    </ligand>
</feature>
<feature type="binding site" evidence="1">
    <location>
        <position position="91"/>
    </location>
    <ligand>
        <name>FMN</name>
        <dbReference type="ChEBI" id="CHEBI:58210"/>
    </ligand>
</feature>
<feature type="binding site" evidence="1">
    <location>
        <begin position="116"/>
        <end position="120"/>
    </location>
    <ligand>
        <name>substrate</name>
    </ligand>
</feature>
<feature type="binding site" evidence="1">
    <location>
        <position position="145"/>
    </location>
    <ligand>
        <name>FMN</name>
        <dbReference type="ChEBI" id="CHEBI:58210"/>
    </ligand>
</feature>
<feature type="binding site" evidence="1">
    <location>
        <position position="178"/>
    </location>
    <ligand>
        <name>FMN</name>
        <dbReference type="ChEBI" id="CHEBI:58210"/>
    </ligand>
</feature>
<feature type="binding site" evidence="1">
    <location>
        <position position="178"/>
    </location>
    <ligand>
        <name>substrate</name>
    </ligand>
</feature>
<feature type="binding site" evidence="1">
    <location>
        <position position="183"/>
    </location>
    <ligand>
        <name>substrate</name>
    </ligand>
</feature>
<feature type="binding site" evidence="1">
    <location>
        <position position="214"/>
    </location>
    <ligand>
        <name>FMN</name>
        <dbReference type="ChEBI" id="CHEBI:58210"/>
    </ligand>
</feature>
<feature type="binding site" evidence="1">
    <location>
        <position position="242"/>
    </location>
    <ligand>
        <name>FMN</name>
        <dbReference type="ChEBI" id="CHEBI:58210"/>
    </ligand>
</feature>
<feature type="binding site" evidence="1">
    <location>
        <begin position="243"/>
        <end position="244"/>
    </location>
    <ligand>
        <name>substrate</name>
    </ligand>
</feature>
<feature type="binding site" evidence="1">
    <location>
        <position position="262"/>
    </location>
    <ligand>
        <name>FMN</name>
        <dbReference type="ChEBI" id="CHEBI:58210"/>
    </ligand>
</feature>
<feature type="binding site" evidence="1">
    <location>
        <position position="291"/>
    </location>
    <ligand>
        <name>FMN</name>
        <dbReference type="ChEBI" id="CHEBI:58210"/>
    </ligand>
</feature>
<feature type="binding site" evidence="1">
    <location>
        <begin position="312"/>
        <end position="313"/>
    </location>
    <ligand>
        <name>FMN</name>
        <dbReference type="ChEBI" id="CHEBI:58210"/>
    </ligand>
</feature>
<keyword id="KW-1003">Cell membrane</keyword>
<keyword id="KW-0285">Flavoprotein</keyword>
<keyword id="KW-0288">FMN</keyword>
<keyword id="KW-0472">Membrane</keyword>
<keyword id="KW-0560">Oxidoreductase</keyword>
<keyword id="KW-0665">Pyrimidine biosynthesis</keyword>
<accession>B6JL11</accession>
<name>PYRD_HELP2</name>
<comment type="function">
    <text evidence="1">Catalyzes the conversion of dihydroorotate to orotate with quinone as electron acceptor.</text>
</comment>
<comment type="catalytic activity">
    <reaction evidence="1">
        <text>(S)-dihydroorotate + a quinone = orotate + a quinol</text>
        <dbReference type="Rhea" id="RHEA:30187"/>
        <dbReference type="ChEBI" id="CHEBI:24646"/>
        <dbReference type="ChEBI" id="CHEBI:30839"/>
        <dbReference type="ChEBI" id="CHEBI:30864"/>
        <dbReference type="ChEBI" id="CHEBI:132124"/>
        <dbReference type="EC" id="1.3.5.2"/>
    </reaction>
</comment>
<comment type="cofactor">
    <cofactor evidence="1">
        <name>FMN</name>
        <dbReference type="ChEBI" id="CHEBI:58210"/>
    </cofactor>
    <text evidence="1">Binds 1 FMN per subunit.</text>
</comment>
<comment type="pathway">
    <text evidence="1">Pyrimidine metabolism; UMP biosynthesis via de novo pathway; orotate from (S)-dihydroorotate (quinone route): step 1/1.</text>
</comment>
<comment type="subunit">
    <text evidence="1">Monomer.</text>
</comment>
<comment type="subcellular location">
    <subcellularLocation>
        <location evidence="1">Cell membrane</location>
        <topology evidence="1">Peripheral membrane protein</topology>
    </subcellularLocation>
</comment>
<comment type="similarity">
    <text evidence="1">Belongs to the dihydroorotate dehydrogenase family. Type 2 subfamily.</text>
</comment>
<organism>
    <name type="scientific">Helicobacter pylori (strain P12)</name>
    <dbReference type="NCBI Taxonomy" id="570508"/>
    <lineage>
        <taxon>Bacteria</taxon>
        <taxon>Pseudomonadati</taxon>
        <taxon>Campylobacterota</taxon>
        <taxon>Epsilonproteobacteria</taxon>
        <taxon>Campylobacterales</taxon>
        <taxon>Helicobacteraceae</taxon>
        <taxon>Helicobacter</taxon>
    </lineage>
</organism>
<gene>
    <name evidence="1" type="primary">pyrD</name>
    <name type="ordered locus">HPP12_0432</name>
</gene>
<reference key="1">
    <citation type="submission" date="2008-10" db="EMBL/GenBank/DDBJ databases">
        <title>The complete genome sequence of Helicobacter pylori strain P12.</title>
        <authorList>
            <person name="Fischer W."/>
            <person name="Windhager L."/>
            <person name="Karnholz A."/>
            <person name="Zeiller M."/>
            <person name="Zimmer R."/>
            <person name="Haas R."/>
        </authorList>
    </citation>
    <scope>NUCLEOTIDE SEQUENCE [LARGE SCALE GENOMIC DNA]</scope>
    <source>
        <strain>P12</strain>
    </source>
</reference>
<sequence>MLYSLLKKYLFSLDAEDAHEKVCKILKMLSSSPFLCNLIDSQWGYKNPKLENEILGLHFPNPLGLAAGFDKNASMLRALIAFGFGYLEAGTLTNEAQMGNERPRLFRHIEEESLQNAMGFNNHGAVLGVRSFKHFAPYKTPIGINLGKNKHIEQAHALEDYKAVLNKCLNIGDYYTFNLSSPNTPNLRDLQNKAFVNELFCMAKEMTHKPLFLKIAPDLETDDMLEIVNSAIGAGAHGIIATNTTIDKSLVFAPKEMGGLSGKCLTKKSREIFKELAKAFFNQSVLVSVGGISDAKEAYERIKMGASLLQIYSAFIYNGPNLCQNILKDLVKLLQKDGFLSVKEAIGADLR</sequence>
<proteinExistence type="inferred from homology"/>
<evidence type="ECO:0000255" key="1">
    <source>
        <dbReference type="HAMAP-Rule" id="MF_00225"/>
    </source>
</evidence>
<protein>
    <recommendedName>
        <fullName evidence="1">Dihydroorotate dehydrogenase (quinone)</fullName>
        <ecNumber evidence="1">1.3.5.2</ecNumber>
    </recommendedName>
    <alternativeName>
        <fullName evidence="1">DHOdehase</fullName>
        <shortName evidence="1">DHOD</shortName>
        <shortName evidence="1">DHODase</shortName>
    </alternativeName>
    <alternativeName>
        <fullName evidence="1">Dihydroorotate oxidase</fullName>
    </alternativeName>
</protein>